<accession>Q04HQ3</accession>
<protein>
    <recommendedName>
        <fullName evidence="1">Large ribosomal subunit protein bL9</fullName>
    </recommendedName>
    <alternativeName>
        <fullName evidence="2">50S ribosomal protein L9</fullName>
    </alternativeName>
</protein>
<dbReference type="EMBL" id="CP000411">
    <property type="protein sequence ID" value="ABJ56019.1"/>
    <property type="molecule type" value="Genomic_DNA"/>
</dbReference>
<dbReference type="RefSeq" id="WP_002817489.1">
    <property type="nucleotide sequence ID" value="NC_008528.1"/>
</dbReference>
<dbReference type="SMR" id="Q04HQ3"/>
<dbReference type="STRING" id="203123.OEOE_0014"/>
<dbReference type="GeneID" id="75064866"/>
<dbReference type="KEGG" id="ooe:OEOE_0014"/>
<dbReference type="eggNOG" id="COG0359">
    <property type="taxonomic scope" value="Bacteria"/>
</dbReference>
<dbReference type="HOGENOM" id="CLU_078938_3_2_9"/>
<dbReference type="Proteomes" id="UP000000774">
    <property type="component" value="Chromosome"/>
</dbReference>
<dbReference type="GO" id="GO:1990904">
    <property type="term" value="C:ribonucleoprotein complex"/>
    <property type="evidence" value="ECO:0007669"/>
    <property type="project" value="UniProtKB-KW"/>
</dbReference>
<dbReference type="GO" id="GO:0005840">
    <property type="term" value="C:ribosome"/>
    <property type="evidence" value="ECO:0007669"/>
    <property type="project" value="UniProtKB-KW"/>
</dbReference>
<dbReference type="GO" id="GO:0019843">
    <property type="term" value="F:rRNA binding"/>
    <property type="evidence" value="ECO:0007669"/>
    <property type="project" value="UniProtKB-UniRule"/>
</dbReference>
<dbReference type="GO" id="GO:0003735">
    <property type="term" value="F:structural constituent of ribosome"/>
    <property type="evidence" value="ECO:0007669"/>
    <property type="project" value="InterPro"/>
</dbReference>
<dbReference type="GO" id="GO:0006412">
    <property type="term" value="P:translation"/>
    <property type="evidence" value="ECO:0007669"/>
    <property type="project" value="UniProtKB-UniRule"/>
</dbReference>
<dbReference type="FunFam" id="3.40.5.10:FF:000002">
    <property type="entry name" value="50S ribosomal protein L9"/>
    <property type="match status" value="1"/>
</dbReference>
<dbReference type="Gene3D" id="3.10.430.100">
    <property type="entry name" value="Ribosomal protein L9, C-terminal domain"/>
    <property type="match status" value="1"/>
</dbReference>
<dbReference type="Gene3D" id="3.40.5.10">
    <property type="entry name" value="Ribosomal protein L9, N-terminal domain"/>
    <property type="match status" value="1"/>
</dbReference>
<dbReference type="HAMAP" id="MF_00503">
    <property type="entry name" value="Ribosomal_bL9"/>
    <property type="match status" value="1"/>
</dbReference>
<dbReference type="InterPro" id="IPR000244">
    <property type="entry name" value="Ribosomal_bL9"/>
</dbReference>
<dbReference type="InterPro" id="IPR009027">
    <property type="entry name" value="Ribosomal_bL9/RNase_H1_N"/>
</dbReference>
<dbReference type="InterPro" id="IPR020594">
    <property type="entry name" value="Ribosomal_bL9_bac/chp"/>
</dbReference>
<dbReference type="InterPro" id="IPR020069">
    <property type="entry name" value="Ribosomal_bL9_C"/>
</dbReference>
<dbReference type="InterPro" id="IPR036791">
    <property type="entry name" value="Ribosomal_bL9_C_sf"/>
</dbReference>
<dbReference type="InterPro" id="IPR020070">
    <property type="entry name" value="Ribosomal_bL9_N"/>
</dbReference>
<dbReference type="InterPro" id="IPR036935">
    <property type="entry name" value="Ribosomal_bL9_N_sf"/>
</dbReference>
<dbReference type="NCBIfam" id="TIGR00158">
    <property type="entry name" value="L9"/>
    <property type="match status" value="1"/>
</dbReference>
<dbReference type="PANTHER" id="PTHR21368">
    <property type="entry name" value="50S RIBOSOMAL PROTEIN L9"/>
    <property type="match status" value="1"/>
</dbReference>
<dbReference type="Pfam" id="PF03948">
    <property type="entry name" value="Ribosomal_L9_C"/>
    <property type="match status" value="1"/>
</dbReference>
<dbReference type="Pfam" id="PF01281">
    <property type="entry name" value="Ribosomal_L9_N"/>
    <property type="match status" value="1"/>
</dbReference>
<dbReference type="SUPFAM" id="SSF55658">
    <property type="entry name" value="L9 N-domain-like"/>
    <property type="match status" value="1"/>
</dbReference>
<dbReference type="SUPFAM" id="SSF55653">
    <property type="entry name" value="Ribosomal protein L9 C-domain"/>
    <property type="match status" value="1"/>
</dbReference>
<dbReference type="PROSITE" id="PS00651">
    <property type="entry name" value="RIBOSOMAL_L9"/>
    <property type="match status" value="1"/>
</dbReference>
<gene>
    <name evidence="1" type="primary">rplI</name>
    <name type="ordered locus">OEOE_0014</name>
</gene>
<feature type="chain" id="PRO_1000014823" description="Large ribosomal subunit protein bL9">
    <location>
        <begin position="1"/>
        <end position="151"/>
    </location>
</feature>
<name>RL9_OENOB</name>
<keyword id="KW-1185">Reference proteome</keyword>
<keyword id="KW-0687">Ribonucleoprotein</keyword>
<keyword id="KW-0689">Ribosomal protein</keyword>
<keyword id="KW-0694">RNA-binding</keyword>
<keyword id="KW-0699">rRNA-binding</keyword>
<comment type="function">
    <text evidence="1">Binds to the 23S rRNA.</text>
</comment>
<comment type="similarity">
    <text evidence="1">Belongs to the bacterial ribosomal protein bL9 family.</text>
</comment>
<evidence type="ECO:0000255" key="1">
    <source>
        <dbReference type="HAMAP-Rule" id="MF_00503"/>
    </source>
</evidence>
<evidence type="ECO:0000305" key="2"/>
<reference key="1">
    <citation type="journal article" date="2006" name="Proc. Natl. Acad. Sci. U.S.A.">
        <title>Comparative genomics of the lactic acid bacteria.</title>
        <authorList>
            <person name="Makarova K.S."/>
            <person name="Slesarev A."/>
            <person name="Wolf Y.I."/>
            <person name="Sorokin A."/>
            <person name="Mirkin B."/>
            <person name="Koonin E.V."/>
            <person name="Pavlov A."/>
            <person name="Pavlova N."/>
            <person name="Karamychev V."/>
            <person name="Polouchine N."/>
            <person name="Shakhova V."/>
            <person name="Grigoriev I."/>
            <person name="Lou Y."/>
            <person name="Rohksar D."/>
            <person name="Lucas S."/>
            <person name="Huang K."/>
            <person name="Goodstein D.M."/>
            <person name="Hawkins T."/>
            <person name="Plengvidhya V."/>
            <person name="Welker D."/>
            <person name="Hughes J."/>
            <person name="Goh Y."/>
            <person name="Benson A."/>
            <person name="Baldwin K."/>
            <person name="Lee J.-H."/>
            <person name="Diaz-Muniz I."/>
            <person name="Dosti B."/>
            <person name="Smeianov V."/>
            <person name="Wechter W."/>
            <person name="Barabote R."/>
            <person name="Lorca G."/>
            <person name="Altermann E."/>
            <person name="Barrangou R."/>
            <person name="Ganesan B."/>
            <person name="Xie Y."/>
            <person name="Rawsthorne H."/>
            <person name="Tamir D."/>
            <person name="Parker C."/>
            <person name="Breidt F."/>
            <person name="Broadbent J.R."/>
            <person name="Hutkins R."/>
            <person name="O'Sullivan D."/>
            <person name="Steele J."/>
            <person name="Unlu G."/>
            <person name="Saier M.H. Jr."/>
            <person name="Klaenhammer T."/>
            <person name="Richardson P."/>
            <person name="Kozyavkin S."/>
            <person name="Weimer B.C."/>
            <person name="Mills D.A."/>
        </authorList>
    </citation>
    <scope>NUCLEOTIDE SEQUENCE [LARGE SCALE GENOMIC DNA]</scope>
    <source>
        <strain>ATCC BAA-331 / PSU-1</strain>
    </source>
</reference>
<organism>
    <name type="scientific">Oenococcus oeni (strain ATCC BAA-331 / PSU-1)</name>
    <dbReference type="NCBI Taxonomy" id="203123"/>
    <lineage>
        <taxon>Bacteria</taxon>
        <taxon>Bacillati</taxon>
        <taxon>Bacillota</taxon>
        <taxon>Bacilli</taxon>
        <taxon>Lactobacillales</taxon>
        <taxon>Lactobacillaceae</taxon>
        <taxon>Oenococcus</taxon>
    </lineage>
</organism>
<proteinExistence type="inferred from homology"/>
<sequence length="151" mass="16738">MKVIFLQDVKNQGKRGQIKEVPDGYANNFLIKNKKAVYASPENISKLNGQQNLEAKKAAEILEEAKQLKNKLASTKTIVQFSEHVGPDGRLNGSVTAKEIADQLAKQFNLTVDKRKLQLPQPIKTIGLHEVPAKLHTQVSAMIKVNVSELN</sequence>